<sequence length="358" mass="37535">MTPRTRTDLDTITAYVPGKSYPGAIKLASNETTLGPLPSVRDAIADAAANANRYPDNGHVALIAAIADHFGVATANVAVGAGSVSLCQELVHATCNDGDEVMFAWRSFEAYPVVTRVAGAVPVTVPLTADYRHDLDAMAAAVTDRTRLIFVCTPNNPTGPALSTSELERFLDAVPDRVVVALDEAYFEYNRSGTDGLDLFRRYPNVVVLRTFSKAYGLAGLRVGYAIADAAIVAALSKVHIAFTVNAVAQAAAIASLAASGELLARTDGVVAERNRVRDALLAAGYEVPESDANFVYLPLGSRSGAFGAASAEAGVLLRPYGDDGVRITIGDPEENDAFLAFATSTEARSIANVAVRA</sequence>
<gene>
    <name evidence="1" type="primary">pat</name>
    <name type="ordered locus">ROP_40030</name>
</gene>
<dbReference type="EC" id="2.6.1.57" evidence="1"/>
<dbReference type="EMBL" id="AP011115">
    <property type="protein sequence ID" value="BAH52250.1"/>
    <property type="molecule type" value="Genomic_DNA"/>
</dbReference>
<dbReference type="RefSeq" id="WP_012691187.1">
    <property type="nucleotide sequence ID" value="NC_012522.1"/>
</dbReference>
<dbReference type="SMR" id="C1B997"/>
<dbReference type="STRING" id="632772.ROP_40030"/>
<dbReference type="KEGG" id="rop:ROP_40030"/>
<dbReference type="PATRIC" id="fig|632772.20.peg.4199"/>
<dbReference type="HOGENOM" id="CLU_017584_3_3_11"/>
<dbReference type="Proteomes" id="UP000002212">
    <property type="component" value="Chromosome"/>
</dbReference>
<dbReference type="GO" id="GO:0008793">
    <property type="term" value="F:aromatic-amino-acid transaminase activity"/>
    <property type="evidence" value="ECO:0007669"/>
    <property type="project" value="UniProtKB-UniRule"/>
</dbReference>
<dbReference type="GO" id="GO:0004400">
    <property type="term" value="F:histidinol-phosphate transaminase activity"/>
    <property type="evidence" value="ECO:0007669"/>
    <property type="project" value="InterPro"/>
</dbReference>
<dbReference type="GO" id="GO:0030170">
    <property type="term" value="F:pyridoxal phosphate binding"/>
    <property type="evidence" value="ECO:0007669"/>
    <property type="project" value="UniProtKB-UniRule"/>
</dbReference>
<dbReference type="GO" id="GO:0000105">
    <property type="term" value="P:L-histidine biosynthetic process"/>
    <property type="evidence" value="ECO:0007669"/>
    <property type="project" value="InterPro"/>
</dbReference>
<dbReference type="CDD" id="cd00609">
    <property type="entry name" value="AAT_like"/>
    <property type="match status" value="1"/>
</dbReference>
<dbReference type="Gene3D" id="3.90.1150.10">
    <property type="entry name" value="Aspartate Aminotransferase, domain 1"/>
    <property type="match status" value="1"/>
</dbReference>
<dbReference type="Gene3D" id="3.40.640.10">
    <property type="entry name" value="Type I PLP-dependent aspartate aminotransferase-like (Major domain)"/>
    <property type="match status" value="1"/>
</dbReference>
<dbReference type="HAMAP" id="MF_01023">
    <property type="entry name" value="HisC_aminotrans_2"/>
    <property type="match status" value="1"/>
</dbReference>
<dbReference type="HAMAP" id="MF_01513">
    <property type="entry name" value="Phe_aminotrans_2"/>
    <property type="match status" value="1"/>
</dbReference>
<dbReference type="InterPro" id="IPR001917">
    <property type="entry name" value="Aminotrans_II_pyridoxalP_BS"/>
</dbReference>
<dbReference type="InterPro" id="IPR004839">
    <property type="entry name" value="Aminotransferase_I/II_large"/>
</dbReference>
<dbReference type="InterPro" id="IPR024892">
    <property type="entry name" value="ArAT"/>
</dbReference>
<dbReference type="InterPro" id="IPR005861">
    <property type="entry name" value="HisP_aminotrans"/>
</dbReference>
<dbReference type="InterPro" id="IPR050106">
    <property type="entry name" value="HistidinolP_aminotransfase"/>
</dbReference>
<dbReference type="InterPro" id="IPR015424">
    <property type="entry name" value="PyrdxlP-dep_Trfase"/>
</dbReference>
<dbReference type="InterPro" id="IPR015421">
    <property type="entry name" value="PyrdxlP-dep_Trfase_major"/>
</dbReference>
<dbReference type="InterPro" id="IPR015422">
    <property type="entry name" value="PyrdxlP-dep_Trfase_small"/>
</dbReference>
<dbReference type="NCBIfam" id="TIGR01141">
    <property type="entry name" value="hisC"/>
    <property type="match status" value="1"/>
</dbReference>
<dbReference type="NCBIfam" id="NF002878">
    <property type="entry name" value="PRK03321.1"/>
    <property type="match status" value="1"/>
</dbReference>
<dbReference type="PANTHER" id="PTHR43643:SF3">
    <property type="entry name" value="HISTIDINOL-PHOSPHATE AMINOTRANSFERASE"/>
    <property type="match status" value="1"/>
</dbReference>
<dbReference type="PANTHER" id="PTHR43643">
    <property type="entry name" value="HISTIDINOL-PHOSPHATE AMINOTRANSFERASE 2"/>
    <property type="match status" value="1"/>
</dbReference>
<dbReference type="Pfam" id="PF00155">
    <property type="entry name" value="Aminotran_1_2"/>
    <property type="match status" value="1"/>
</dbReference>
<dbReference type="SUPFAM" id="SSF53383">
    <property type="entry name" value="PLP-dependent transferases"/>
    <property type="match status" value="1"/>
</dbReference>
<dbReference type="PROSITE" id="PS00599">
    <property type="entry name" value="AA_TRANSFER_CLASS_2"/>
    <property type="match status" value="1"/>
</dbReference>
<evidence type="ECO:0000255" key="1">
    <source>
        <dbReference type="HAMAP-Rule" id="MF_01513"/>
    </source>
</evidence>
<organism>
    <name type="scientific">Rhodococcus opacus (strain B4)</name>
    <dbReference type="NCBI Taxonomy" id="632772"/>
    <lineage>
        <taxon>Bacteria</taxon>
        <taxon>Bacillati</taxon>
        <taxon>Actinomycetota</taxon>
        <taxon>Actinomycetes</taxon>
        <taxon>Mycobacteriales</taxon>
        <taxon>Nocardiaceae</taxon>
        <taxon>Rhodococcus</taxon>
    </lineage>
</organism>
<accession>C1B997</accession>
<name>PATR_RHOOB</name>
<protein>
    <recommendedName>
        <fullName evidence="1">Aromatic amino acid aminotransferase</fullName>
        <shortName evidence="1">ArAT</shortName>
        <ecNumber evidence="1">2.6.1.57</ecNumber>
    </recommendedName>
</protein>
<reference key="1">
    <citation type="submission" date="2009-03" db="EMBL/GenBank/DDBJ databases">
        <title>Comparison of the complete genome sequences of Rhodococcus erythropolis PR4 and Rhodococcus opacus B4.</title>
        <authorList>
            <person name="Takarada H."/>
            <person name="Sekine M."/>
            <person name="Hosoyama A."/>
            <person name="Yamada R."/>
            <person name="Fujisawa T."/>
            <person name="Omata S."/>
            <person name="Shimizu A."/>
            <person name="Tsukatani N."/>
            <person name="Tanikawa S."/>
            <person name="Fujita N."/>
            <person name="Harayama S."/>
        </authorList>
    </citation>
    <scope>NUCLEOTIDE SEQUENCE [LARGE SCALE GENOMIC DNA]</scope>
    <source>
        <strain>B4</strain>
    </source>
</reference>
<keyword id="KW-0032">Aminotransferase</keyword>
<keyword id="KW-0663">Pyridoxal phosphate</keyword>
<keyword id="KW-0808">Transferase</keyword>
<feature type="chain" id="PRO_1000185065" description="Aromatic amino acid aminotransferase">
    <location>
        <begin position="1"/>
        <end position="358"/>
    </location>
</feature>
<feature type="modified residue" description="N6-(pyridoxal phosphate)lysine" evidence="1">
    <location>
        <position position="214"/>
    </location>
</feature>
<comment type="function">
    <text evidence="1">Aminotransferase that catalyzes the conversion of aromatic amino acids and 2-oxoglutarate into corresponding aromatic oxo acids and L-glutamate.</text>
</comment>
<comment type="catalytic activity">
    <reaction evidence="1">
        <text>an aromatic L-alpha-amino acid + 2-oxoglutarate = an aromatic oxo-acid + L-glutamate</text>
        <dbReference type="Rhea" id="RHEA:17533"/>
        <dbReference type="ChEBI" id="CHEBI:16810"/>
        <dbReference type="ChEBI" id="CHEBI:29985"/>
        <dbReference type="ChEBI" id="CHEBI:73309"/>
        <dbReference type="ChEBI" id="CHEBI:84824"/>
        <dbReference type="EC" id="2.6.1.57"/>
    </reaction>
</comment>
<comment type="cofactor">
    <cofactor evidence="1">
        <name>pyridoxal 5'-phosphate</name>
        <dbReference type="ChEBI" id="CHEBI:597326"/>
    </cofactor>
</comment>
<comment type="subunit">
    <text evidence="1">Homodimer.</text>
</comment>
<comment type="similarity">
    <text evidence="1">Belongs to the class-II pyridoxal-phosphate-dependent aminotransferase family.</text>
</comment>
<proteinExistence type="inferred from homology"/>